<comment type="similarity">
    <text evidence="1">Belongs to the UPF0597 family.</text>
</comment>
<gene>
    <name evidence="1" type="primary">yhaM</name>
    <name type="ordered locus">SPA3107</name>
</gene>
<reference key="1">
    <citation type="journal article" date="2004" name="Nat. Genet.">
        <title>Comparison of genome degradation in Paratyphi A and Typhi, human-restricted serovars of Salmonella enterica that cause typhoid.</title>
        <authorList>
            <person name="McClelland M."/>
            <person name="Sanderson K.E."/>
            <person name="Clifton S.W."/>
            <person name="Latreille P."/>
            <person name="Porwollik S."/>
            <person name="Sabo A."/>
            <person name="Meyer R."/>
            <person name="Bieri T."/>
            <person name="Ozersky P."/>
            <person name="McLellan M."/>
            <person name="Harkins C.R."/>
            <person name="Wang C."/>
            <person name="Nguyen C."/>
            <person name="Berghoff A."/>
            <person name="Elliott G."/>
            <person name="Kohlberg S."/>
            <person name="Strong C."/>
            <person name="Du F."/>
            <person name="Carter J."/>
            <person name="Kremizki C."/>
            <person name="Layman D."/>
            <person name="Leonard S."/>
            <person name="Sun H."/>
            <person name="Fulton L."/>
            <person name="Nash W."/>
            <person name="Miner T."/>
            <person name="Minx P."/>
            <person name="Delehaunty K."/>
            <person name="Fronick C."/>
            <person name="Magrini V."/>
            <person name="Nhan M."/>
            <person name="Warren W."/>
            <person name="Florea L."/>
            <person name="Spieth J."/>
            <person name="Wilson R.K."/>
        </authorList>
    </citation>
    <scope>NUCLEOTIDE SEQUENCE [LARGE SCALE GENOMIC DNA]</scope>
    <source>
        <strain>ATCC 9150 / SARB42</strain>
    </source>
</reference>
<name>YHAM_SALPA</name>
<sequence>MFESKINPLWQSFILAVQEEVKPALGCTEPISLALAAAAAAAELDGTVERIDAWVSPNLMKNGMGVTVPGTGMVGLPIAAALGALGGDAKAGLEVLKDASAKAVADAKAMLAAGHVAVMLQEPCNDILFSRAKVYSGDSWACVTIVGDHTNIVRIETDKGVVFTQADNAQEEEKTSPLGVLSHTSLEEILAFVNAVPFDAIRFILDAARLNGALSQEGLRGSWGLHIGSTLVKQCDRGLLAKDLSTAILIRTSAASDARMGGATLPAMSNSGSGNQGITATVPVMVVAEHVGADDECLARALMLSHLSAIYIHHQLPRLSALCAATTAAMGAAAGMAWLIDGRYDTIAMAISSMIGDVSGMICDGASNSCAMKVSISASAAWKAVLMALDDTAVTGNEGIVAHNVEQSISNLCSLACRSMQQTDKQIIEIMASKAH</sequence>
<evidence type="ECO:0000255" key="1">
    <source>
        <dbReference type="HAMAP-Rule" id="MF_01845"/>
    </source>
</evidence>
<dbReference type="EMBL" id="CP000026">
    <property type="protein sequence ID" value="AAV78939.1"/>
    <property type="molecule type" value="Genomic_DNA"/>
</dbReference>
<dbReference type="RefSeq" id="WP_000463072.1">
    <property type="nucleotide sequence ID" value="NC_006511.1"/>
</dbReference>
<dbReference type="SMR" id="Q5PCB2"/>
<dbReference type="KEGG" id="spt:SPA3107"/>
<dbReference type="HOGENOM" id="CLU_051840_0_0_6"/>
<dbReference type="Proteomes" id="UP000008185">
    <property type="component" value="Chromosome"/>
</dbReference>
<dbReference type="GO" id="GO:0080146">
    <property type="term" value="F:L-cysteine desulfhydrase activity"/>
    <property type="evidence" value="ECO:0007669"/>
    <property type="project" value="TreeGrafter"/>
</dbReference>
<dbReference type="GO" id="GO:0019450">
    <property type="term" value="P:L-cysteine catabolic process to pyruvate"/>
    <property type="evidence" value="ECO:0007669"/>
    <property type="project" value="TreeGrafter"/>
</dbReference>
<dbReference type="HAMAP" id="MF_01845">
    <property type="entry name" value="UPF0597"/>
    <property type="match status" value="1"/>
</dbReference>
<dbReference type="InterPro" id="IPR005130">
    <property type="entry name" value="Ser_deHydtase-like_asu"/>
</dbReference>
<dbReference type="InterPro" id="IPR021144">
    <property type="entry name" value="UPF0597"/>
</dbReference>
<dbReference type="PANTHER" id="PTHR30501">
    <property type="entry name" value="UPF0597 PROTEIN YHAM"/>
    <property type="match status" value="1"/>
</dbReference>
<dbReference type="PANTHER" id="PTHR30501:SF2">
    <property type="entry name" value="UPF0597 PROTEIN YHAM"/>
    <property type="match status" value="1"/>
</dbReference>
<dbReference type="Pfam" id="PF03313">
    <property type="entry name" value="SDH_alpha"/>
    <property type="match status" value="1"/>
</dbReference>
<dbReference type="PIRSF" id="PIRSF006054">
    <property type="entry name" value="UCP006054"/>
    <property type="match status" value="1"/>
</dbReference>
<feature type="chain" id="PRO_0000339840" description="UPF0597 protein YhaM">
    <location>
        <begin position="1"/>
        <end position="436"/>
    </location>
</feature>
<proteinExistence type="inferred from homology"/>
<protein>
    <recommendedName>
        <fullName evidence="1">UPF0597 protein YhaM</fullName>
    </recommendedName>
</protein>
<organism>
    <name type="scientific">Salmonella paratyphi A (strain ATCC 9150 / SARB42)</name>
    <dbReference type="NCBI Taxonomy" id="295319"/>
    <lineage>
        <taxon>Bacteria</taxon>
        <taxon>Pseudomonadati</taxon>
        <taxon>Pseudomonadota</taxon>
        <taxon>Gammaproteobacteria</taxon>
        <taxon>Enterobacterales</taxon>
        <taxon>Enterobacteriaceae</taxon>
        <taxon>Salmonella</taxon>
    </lineage>
</organism>
<accession>Q5PCB2</accession>